<sequence length="255" mass="28965">MSQEFLARILEQKAREVEQMKLEQIQPLRQTYRLAEFLKNHQDRLQVIAEVKKASPSLGDINLDVDIVQQAQTYEENGAVMISVLTDEVFFKGHLDYLREISSQVEIPTLNKDFIIDEKQIIRARNAGATVILLIVAALAEERLKELYDYATVLGLEVLVETHNLAELEVAHRLGAQIIGVNNRNLTTFEVDLQTSVDLAKHFKDDCLYISESAIFTRQDAERLAPYFNGILVGTALMQAENVVQRIKELQIDKG</sequence>
<reference key="1">
    <citation type="journal article" date="2010" name="Genome Biol.">
        <title>Structure and dynamics of the pan-genome of Streptococcus pneumoniae and closely related species.</title>
        <authorList>
            <person name="Donati C."/>
            <person name="Hiller N.L."/>
            <person name="Tettelin H."/>
            <person name="Muzzi A."/>
            <person name="Croucher N.J."/>
            <person name="Angiuoli S.V."/>
            <person name="Oggioni M."/>
            <person name="Dunning Hotopp J.C."/>
            <person name="Hu F.Z."/>
            <person name="Riley D.R."/>
            <person name="Covacci A."/>
            <person name="Mitchell T.J."/>
            <person name="Bentley S.D."/>
            <person name="Kilian M."/>
            <person name="Ehrlich G.D."/>
            <person name="Rappuoli R."/>
            <person name="Moxon E.R."/>
            <person name="Masignani V."/>
        </authorList>
    </citation>
    <scope>NUCLEOTIDE SEQUENCE [LARGE SCALE GENOMIC DNA]</scope>
    <source>
        <strain>Hungary19A-6</strain>
    </source>
</reference>
<feature type="chain" id="PRO_1000095898" description="Indole-3-glycerol phosphate synthase">
    <location>
        <begin position="1"/>
        <end position="255"/>
    </location>
</feature>
<organism>
    <name type="scientific">Streptococcus pneumoniae (strain Hungary19A-6)</name>
    <dbReference type="NCBI Taxonomy" id="487214"/>
    <lineage>
        <taxon>Bacteria</taxon>
        <taxon>Bacillati</taxon>
        <taxon>Bacillota</taxon>
        <taxon>Bacilli</taxon>
        <taxon>Lactobacillales</taxon>
        <taxon>Streptococcaceae</taxon>
        <taxon>Streptococcus</taxon>
    </lineage>
</organism>
<accession>B1I7S9</accession>
<protein>
    <recommendedName>
        <fullName evidence="1">Indole-3-glycerol phosphate synthase</fullName>
        <shortName evidence="1">IGPS</shortName>
        <ecNumber evidence="1">4.1.1.48</ecNumber>
    </recommendedName>
</protein>
<dbReference type="EC" id="4.1.1.48" evidence="1"/>
<dbReference type="EMBL" id="CP000936">
    <property type="protein sequence ID" value="ACA36507.1"/>
    <property type="molecule type" value="Genomic_DNA"/>
</dbReference>
<dbReference type="RefSeq" id="WP_000076545.1">
    <property type="nucleotide sequence ID" value="NC_010380.1"/>
</dbReference>
<dbReference type="SMR" id="B1I7S9"/>
<dbReference type="KEGG" id="spv:SPH_1936"/>
<dbReference type="HOGENOM" id="CLU_034247_2_1_9"/>
<dbReference type="UniPathway" id="UPA00035">
    <property type="reaction ID" value="UER00043"/>
</dbReference>
<dbReference type="Proteomes" id="UP000002163">
    <property type="component" value="Chromosome"/>
</dbReference>
<dbReference type="GO" id="GO:0004425">
    <property type="term" value="F:indole-3-glycerol-phosphate synthase activity"/>
    <property type="evidence" value="ECO:0007669"/>
    <property type="project" value="UniProtKB-UniRule"/>
</dbReference>
<dbReference type="GO" id="GO:0004640">
    <property type="term" value="F:phosphoribosylanthranilate isomerase activity"/>
    <property type="evidence" value="ECO:0007669"/>
    <property type="project" value="TreeGrafter"/>
</dbReference>
<dbReference type="GO" id="GO:0000162">
    <property type="term" value="P:L-tryptophan biosynthetic process"/>
    <property type="evidence" value="ECO:0007669"/>
    <property type="project" value="UniProtKB-UniRule"/>
</dbReference>
<dbReference type="CDD" id="cd00331">
    <property type="entry name" value="IGPS"/>
    <property type="match status" value="1"/>
</dbReference>
<dbReference type="FunFam" id="3.20.20.70:FF:000024">
    <property type="entry name" value="Indole-3-glycerol phosphate synthase"/>
    <property type="match status" value="1"/>
</dbReference>
<dbReference type="Gene3D" id="3.20.20.70">
    <property type="entry name" value="Aldolase class I"/>
    <property type="match status" value="1"/>
</dbReference>
<dbReference type="HAMAP" id="MF_00134_B">
    <property type="entry name" value="IGPS_B"/>
    <property type="match status" value="1"/>
</dbReference>
<dbReference type="InterPro" id="IPR013785">
    <property type="entry name" value="Aldolase_TIM"/>
</dbReference>
<dbReference type="InterPro" id="IPR045186">
    <property type="entry name" value="Indole-3-glycerol_P_synth"/>
</dbReference>
<dbReference type="InterPro" id="IPR013798">
    <property type="entry name" value="Indole-3-glycerol_P_synth_dom"/>
</dbReference>
<dbReference type="InterPro" id="IPR001468">
    <property type="entry name" value="Indole-3-GlycerolPSynthase_CS"/>
</dbReference>
<dbReference type="InterPro" id="IPR011060">
    <property type="entry name" value="RibuloseP-bd_barrel"/>
</dbReference>
<dbReference type="NCBIfam" id="NF001371">
    <property type="entry name" value="PRK00278.1-3"/>
    <property type="match status" value="1"/>
</dbReference>
<dbReference type="NCBIfam" id="NF001377">
    <property type="entry name" value="PRK00278.2-4"/>
    <property type="match status" value="1"/>
</dbReference>
<dbReference type="PANTHER" id="PTHR22854:SF2">
    <property type="entry name" value="INDOLE-3-GLYCEROL-PHOSPHATE SYNTHASE"/>
    <property type="match status" value="1"/>
</dbReference>
<dbReference type="PANTHER" id="PTHR22854">
    <property type="entry name" value="TRYPTOPHAN BIOSYNTHESIS PROTEIN"/>
    <property type="match status" value="1"/>
</dbReference>
<dbReference type="Pfam" id="PF00218">
    <property type="entry name" value="IGPS"/>
    <property type="match status" value="1"/>
</dbReference>
<dbReference type="SUPFAM" id="SSF51366">
    <property type="entry name" value="Ribulose-phoshate binding barrel"/>
    <property type="match status" value="1"/>
</dbReference>
<dbReference type="PROSITE" id="PS00614">
    <property type="entry name" value="IGPS"/>
    <property type="match status" value="1"/>
</dbReference>
<name>TRPC_STRPI</name>
<evidence type="ECO:0000255" key="1">
    <source>
        <dbReference type="HAMAP-Rule" id="MF_00134"/>
    </source>
</evidence>
<keyword id="KW-0028">Amino-acid biosynthesis</keyword>
<keyword id="KW-0057">Aromatic amino acid biosynthesis</keyword>
<keyword id="KW-0210">Decarboxylase</keyword>
<keyword id="KW-0456">Lyase</keyword>
<keyword id="KW-0822">Tryptophan biosynthesis</keyword>
<proteinExistence type="inferred from homology"/>
<gene>
    <name evidence="1" type="primary">trpC</name>
    <name type="ordered locus">SPH_1936</name>
</gene>
<comment type="catalytic activity">
    <reaction evidence="1">
        <text>1-(2-carboxyphenylamino)-1-deoxy-D-ribulose 5-phosphate + H(+) = (1S,2R)-1-C-(indol-3-yl)glycerol 3-phosphate + CO2 + H2O</text>
        <dbReference type="Rhea" id="RHEA:23476"/>
        <dbReference type="ChEBI" id="CHEBI:15377"/>
        <dbReference type="ChEBI" id="CHEBI:15378"/>
        <dbReference type="ChEBI" id="CHEBI:16526"/>
        <dbReference type="ChEBI" id="CHEBI:58613"/>
        <dbReference type="ChEBI" id="CHEBI:58866"/>
        <dbReference type="EC" id="4.1.1.48"/>
    </reaction>
</comment>
<comment type="pathway">
    <text evidence="1">Amino-acid biosynthesis; L-tryptophan biosynthesis; L-tryptophan from chorismate: step 4/5.</text>
</comment>
<comment type="similarity">
    <text evidence="1">Belongs to the TrpC family.</text>
</comment>